<dbReference type="EC" id="5.1.1.3" evidence="1"/>
<dbReference type="EMBL" id="BX571874">
    <property type="protein sequence ID" value="CAE17106.1"/>
    <property type="molecule type" value="Genomic_DNA"/>
</dbReference>
<dbReference type="RefSeq" id="WP_011148802.1">
    <property type="nucleotide sequence ID" value="NC_005126.1"/>
</dbReference>
<dbReference type="SMR" id="Q7MYE4"/>
<dbReference type="STRING" id="243265.plu4734"/>
<dbReference type="GeneID" id="48850969"/>
<dbReference type="KEGG" id="plu:plu4734"/>
<dbReference type="eggNOG" id="COG0796">
    <property type="taxonomic scope" value="Bacteria"/>
</dbReference>
<dbReference type="HOGENOM" id="CLU_052344_2_0_6"/>
<dbReference type="OrthoDB" id="9801055at2"/>
<dbReference type="UniPathway" id="UPA00219"/>
<dbReference type="Proteomes" id="UP000002514">
    <property type="component" value="Chromosome"/>
</dbReference>
<dbReference type="GO" id="GO:0008881">
    <property type="term" value="F:glutamate racemase activity"/>
    <property type="evidence" value="ECO:0007669"/>
    <property type="project" value="UniProtKB-UniRule"/>
</dbReference>
<dbReference type="GO" id="GO:0071555">
    <property type="term" value="P:cell wall organization"/>
    <property type="evidence" value="ECO:0007669"/>
    <property type="project" value="UniProtKB-KW"/>
</dbReference>
<dbReference type="GO" id="GO:0009252">
    <property type="term" value="P:peptidoglycan biosynthetic process"/>
    <property type="evidence" value="ECO:0007669"/>
    <property type="project" value="UniProtKB-UniRule"/>
</dbReference>
<dbReference type="GO" id="GO:0008360">
    <property type="term" value="P:regulation of cell shape"/>
    <property type="evidence" value="ECO:0007669"/>
    <property type="project" value="UniProtKB-KW"/>
</dbReference>
<dbReference type="FunFam" id="3.40.50.1860:FF:000002">
    <property type="entry name" value="Glutamate racemase"/>
    <property type="match status" value="1"/>
</dbReference>
<dbReference type="Gene3D" id="3.40.50.1860">
    <property type="match status" value="2"/>
</dbReference>
<dbReference type="HAMAP" id="MF_00258">
    <property type="entry name" value="Glu_racemase"/>
    <property type="match status" value="1"/>
</dbReference>
<dbReference type="InterPro" id="IPR015942">
    <property type="entry name" value="Asp/Glu/hydantoin_racemase"/>
</dbReference>
<dbReference type="InterPro" id="IPR001920">
    <property type="entry name" value="Asp/Glu_race"/>
</dbReference>
<dbReference type="InterPro" id="IPR018187">
    <property type="entry name" value="Asp/Glu_racemase_AS_1"/>
</dbReference>
<dbReference type="InterPro" id="IPR033134">
    <property type="entry name" value="Asp/Glu_racemase_AS_2"/>
</dbReference>
<dbReference type="InterPro" id="IPR004391">
    <property type="entry name" value="Glu_race"/>
</dbReference>
<dbReference type="NCBIfam" id="TIGR00067">
    <property type="entry name" value="glut_race"/>
    <property type="match status" value="1"/>
</dbReference>
<dbReference type="NCBIfam" id="NF002034">
    <property type="entry name" value="PRK00865.1-1"/>
    <property type="match status" value="1"/>
</dbReference>
<dbReference type="PANTHER" id="PTHR21198">
    <property type="entry name" value="GLUTAMATE RACEMASE"/>
    <property type="match status" value="1"/>
</dbReference>
<dbReference type="PANTHER" id="PTHR21198:SF2">
    <property type="entry name" value="GLUTAMATE RACEMASE"/>
    <property type="match status" value="1"/>
</dbReference>
<dbReference type="Pfam" id="PF01177">
    <property type="entry name" value="Asp_Glu_race"/>
    <property type="match status" value="1"/>
</dbReference>
<dbReference type="SUPFAM" id="SSF53681">
    <property type="entry name" value="Aspartate/glutamate racemase"/>
    <property type="match status" value="2"/>
</dbReference>
<dbReference type="PROSITE" id="PS00923">
    <property type="entry name" value="ASP_GLU_RACEMASE_1"/>
    <property type="match status" value="1"/>
</dbReference>
<dbReference type="PROSITE" id="PS00924">
    <property type="entry name" value="ASP_GLU_RACEMASE_2"/>
    <property type="match status" value="1"/>
</dbReference>
<evidence type="ECO:0000255" key="1">
    <source>
        <dbReference type="HAMAP-Rule" id="MF_00258"/>
    </source>
</evidence>
<comment type="function">
    <text evidence="1">Provides the (R)-glutamate required for cell wall biosynthesis.</text>
</comment>
<comment type="catalytic activity">
    <reaction evidence="1">
        <text>L-glutamate = D-glutamate</text>
        <dbReference type="Rhea" id="RHEA:12813"/>
        <dbReference type="ChEBI" id="CHEBI:29985"/>
        <dbReference type="ChEBI" id="CHEBI:29986"/>
        <dbReference type="EC" id="5.1.1.3"/>
    </reaction>
</comment>
<comment type="pathway">
    <text evidence="1">Cell wall biogenesis; peptidoglycan biosynthesis.</text>
</comment>
<comment type="similarity">
    <text evidence="1">Belongs to the aspartate/glutamate racemases family.</text>
</comment>
<sequence>MAIAFQDVNTTSLGAITSDLNKAARPTVLVFDSGVGGLSIYQEIRQLLPDLHYIYVFDNEAFPYGEKSEEFIVERVVQIVGAIQQKHPLTIVVIACNTASTVSLPALRERFSFPVVGVVPAIKPAAKLTRNGVVGLLATRATVNRSYTKELIEKFATGCRIESIGSAELVELAEIKLHGGKVSPDILKKILKPWLGMKKPPDTVVLGCTHFPLLAEELVQILPDGTRLIDSGVAIARRTAWLVKHQNNLVCTSADSLAYCMKVNTDTDALIPVLQEYGFSKLEKLIT</sequence>
<protein>
    <recommendedName>
        <fullName evidence="1">Glutamate racemase</fullName>
        <ecNumber evidence="1">5.1.1.3</ecNumber>
    </recommendedName>
</protein>
<accession>Q7MYE4</accession>
<organism>
    <name type="scientific">Photorhabdus laumondii subsp. laumondii (strain DSM 15139 / CIP 105565 / TT01)</name>
    <name type="common">Photorhabdus luminescens subsp. laumondii</name>
    <dbReference type="NCBI Taxonomy" id="243265"/>
    <lineage>
        <taxon>Bacteria</taxon>
        <taxon>Pseudomonadati</taxon>
        <taxon>Pseudomonadota</taxon>
        <taxon>Gammaproteobacteria</taxon>
        <taxon>Enterobacterales</taxon>
        <taxon>Morganellaceae</taxon>
        <taxon>Photorhabdus</taxon>
    </lineage>
</organism>
<gene>
    <name evidence="1" type="primary">murI</name>
    <name type="ordered locus">plu4734</name>
</gene>
<name>MURI_PHOLL</name>
<proteinExistence type="inferred from homology"/>
<keyword id="KW-0133">Cell shape</keyword>
<keyword id="KW-0961">Cell wall biogenesis/degradation</keyword>
<keyword id="KW-0413">Isomerase</keyword>
<keyword id="KW-0573">Peptidoglycan synthesis</keyword>
<keyword id="KW-1185">Reference proteome</keyword>
<reference key="1">
    <citation type="journal article" date="2003" name="Nat. Biotechnol.">
        <title>The genome sequence of the entomopathogenic bacterium Photorhabdus luminescens.</title>
        <authorList>
            <person name="Duchaud E."/>
            <person name="Rusniok C."/>
            <person name="Frangeul L."/>
            <person name="Buchrieser C."/>
            <person name="Givaudan A."/>
            <person name="Taourit S."/>
            <person name="Bocs S."/>
            <person name="Boursaux-Eude C."/>
            <person name="Chandler M."/>
            <person name="Charles J.-F."/>
            <person name="Dassa E."/>
            <person name="Derose R."/>
            <person name="Derzelle S."/>
            <person name="Freyssinet G."/>
            <person name="Gaudriault S."/>
            <person name="Medigue C."/>
            <person name="Lanois A."/>
            <person name="Powell K."/>
            <person name="Siguier P."/>
            <person name="Vincent R."/>
            <person name="Wingate V."/>
            <person name="Zouine M."/>
            <person name="Glaser P."/>
            <person name="Boemare N."/>
            <person name="Danchin A."/>
            <person name="Kunst F."/>
        </authorList>
    </citation>
    <scope>NUCLEOTIDE SEQUENCE [LARGE SCALE GENOMIC DNA]</scope>
    <source>
        <strain>DSM 15139 / CIP 105565 / TT01</strain>
    </source>
</reference>
<feature type="chain" id="PRO_1000047595" description="Glutamate racemase">
    <location>
        <begin position="1"/>
        <end position="287"/>
    </location>
</feature>
<feature type="active site" description="Proton donor/acceptor" evidence="1">
    <location>
        <position position="96"/>
    </location>
</feature>
<feature type="active site" description="Proton donor/acceptor" evidence="1">
    <location>
        <position position="208"/>
    </location>
</feature>
<feature type="binding site" evidence="1">
    <location>
        <begin position="32"/>
        <end position="33"/>
    </location>
    <ligand>
        <name>substrate</name>
    </ligand>
</feature>
<feature type="binding site" evidence="1">
    <location>
        <begin position="64"/>
        <end position="65"/>
    </location>
    <ligand>
        <name>substrate</name>
    </ligand>
</feature>
<feature type="binding site" evidence="1">
    <location>
        <begin position="97"/>
        <end position="98"/>
    </location>
    <ligand>
        <name>substrate</name>
    </ligand>
</feature>
<feature type="binding site" evidence="1">
    <location>
        <begin position="209"/>
        <end position="210"/>
    </location>
    <ligand>
        <name>substrate</name>
    </ligand>
</feature>